<keyword id="KW-0004">4Fe-4S</keyword>
<keyword id="KW-0963">Cytoplasm</keyword>
<keyword id="KW-1015">Disulfide bond</keyword>
<keyword id="KW-0408">Iron</keyword>
<keyword id="KW-0411">Iron-sulfur</keyword>
<keyword id="KW-0479">Metal-binding</keyword>
<keyword id="KW-0489">Methyltransferase</keyword>
<keyword id="KW-1185">Reference proteome</keyword>
<keyword id="KW-0698">rRNA processing</keyword>
<keyword id="KW-0949">S-adenosyl-L-methionine</keyword>
<keyword id="KW-0808">Transferase</keyword>
<keyword id="KW-0819">tRNA processing</keyword>
<name>RLMN_BIFLO</name>
<reference key="1">
    <citation type="journal article" date="2002" name="Proc. Natl. Acad. Sci. U.S.A.">
        <title>The genome sequence of Bifidobacterium longum reflects its adaptation to the human gastrointestinal tract.</title>
        <authorList>
            <person name="Schell M.A."/>
            <person name="Karmirantzou M."/>
            <person name="Snel B."/>
            <person name="Vilanova D."/>
            <person name="Berger B."/>
            <person name="Pessi G."/>
            <person name="Zwahlen M.-C."/>
            <person name="Desiere F."/>
            <person name="Bork P."/>
            <person name="Delley M."/>
            <person name="Pridmore R.D."/>
            <person name="Arigoni F."/>
        </authorList>
    </citation>
    <scope>NUCLEOTIDE SEQUENCE [LARGE SCALE GENOMIC DNA]</scope>
    <source>
        <strain>NCC 2705</strain>
    </source>
</reference>
<dbReference type="EC" id="2.1.1.192" evidence="1"/>
<dbReference type="EMBL" id="AE014295">
    <property type="protein sequence ID" value="AAN25303.1"/>
    <property type="molecule type" value="Genomic_DNA"/>
</dbReference>
<dbReference type="RefSeq" id="NP_696667.1">
    <property type="nucleotide sequence ID" value="NC_004307.2"/>
</dbReference>
<dbReference type="RefSeq" id="WP_011068098.1">
    <property type="nucleotide sequence ID" value="NC_004307.2"/>
</dbReference>
<dbReference type="SMR" id="Q8G481"/>
<dbReference type="STRING" id="206672.BL1508"/>
<dbReference type="EnsemblBacteria" id="AAN25303">
    <property type="protein sequence ID" value="AAN25303"/>
    <property type="gene ID" value="BL1508"/>
</dbReference>
<dbReference type="KEGG" id="blo:BL1508"/>
<dbReference type="PATRIC" id="fig|206672.9.peg.380"/>
<dbReference type="HOGENOM" id="CLU_029101_0_2_11"/>
<dbReference type="OrthoDB" id="9793973at2"/>
<dbReference type="PhylomeDB" id="Q8G481"/>
<dbReference type="Proteomes" id="UP000000439">
    <property type="component" value="Chromosome"/>
</dbReference>
<dbReference type="GO" id="GO:0005737">
    <property type="term" value="C:cytoplasm"/>
    <property type="evidence" value="ECO:0007669"/>
    <property type="project" value="UniProtKB-SubCell"/>
</dbReference>
<dbReference type="GO" id="GO:0051539">
    <property type="term" value="F:4 iron, 4 sulfur cluster binding"/>
    <property type="evidence" value="ECO:0007669"/>
    <property type="project" value="UniProtKB-UniRule"/>
</dbReference>
<dbReference type="GO" id="GO:0046872">
    <property type="term" value="F:metal ion binding"/>
    <property type="evidence" value="ECO:0007669"/>
    <property type="project" value="UniProtKB-KW"/>
</dbReference>
<dbReference type="GO" id="GO:0070040">
    <property type="term" value="F:rRNA (adenine(2503)-C2-)-methyltransferase activity"/>
    <property type="evidence" value="ECO:0007669"/>
    <property type="project" value="UniProtKB-UniRule"/>
</dbReference>
<dbReference type="GO" id="GO:0019843">
    <property type="term" value="F:rRNA binding"/>
    <property type="evidence" value="ECO:0007669"/>
    <property type="project" value="UniProtKB-UniRule"/>
</dbReference>
<dbReference type="GO" id="GO:0002935">
    <property type="term" value="F:tRNA (adenine(37)-C2)-methyltransferase activity"/>
    <property type="evidence" value="ECO:0007669"/>
    <property type="project" value="UniProtKB-UniRule"/>
</dbReference>
<dbReference type="GO" id="GO:0000049">
    <property type="term" value="F:tRNA binding"/>
    <property type="evidence" value="ECO:0007669"/>
    <property type="project" value="UniProtKB-UniRule"/>
</dbReference>
<dbReference type="GO" id="GO:0070475">
    <property type="term" value="P:rRNA base methylation"/>
    <property type="evidence" value="ECO:0007669"/>
    <property type="project" value="UniProtKB-UniRule"/>
</dbReference>
<dbReference type="GO" id="GO:0030488">
    <property type="term" value="P:tRNA methylation"/>
    <property type="evidence" value="ECO:0007669"/>
    <property type="project" value="UniProtKB-UniRule"/>
</dbReference>
<dbReference type="CDD" id="cd01335">
    <property type="entry name" value="Radical_SAM"/>
    <property type="match status" value="1"/>
</dbReference>
<dbReference type="FunFam" id="3.20.20.70:FF:000014">
    <property type="entry name" value="Probable dual-specificity RNA methyltransferase RlmN"/>
    <property type="match status" value="1"/>
</dbReference>
<dbReference type="Gene3D" id="3.20.20.70">
    <property type="entry name" value="Aldolase class I"/>
    <property type="match status" value="1"/>
</dbReference>
<dbReference type="HAMAP" id="MF_01849">
    <property type="entry name" value="RNA_methyltr_RlmN"/>
    <property type="match status" value="1"/>
</dbReference>
<dbReference type="InterPro" id="IPR013785">
    <property type="entry name" value="Aldolase_TIM"/>
</dbReference>
<dbReference type="InterPro" id="IPR006638">
    <property type="entry name" value="Elp3/MiaA/NifB-like_rSAM"/>
</dbReference>
<dbReference type="InterPro" id="IPR040072">
    <property type="entry name" value="Methyltransferase_A"/>
</dbReference>
<dbReference type="InterPro" id="IPR027492">
    <property type="entry name" value="RNA_MTrfase_RlmN"/>
</dbReference>
<dbReference type="InterPro" id="IPR004383">
    <property type="entry name" value="rRNA_lsu_MTrfase_RlmN/Cfr"/>
</dbReference>
<dbReference type="InterPro" id="IPR007197">
    <property type="entry name" value="rSAM"/>
</dbReference>
<dbReference type="NCBIfam" id="TIGR00048">
    <property type="entry name" value="rRNA_mod_RlmN"/>
    <property type="match status" value="1"/>
</dbReference>
<dbReference type="PANTHER" id="PTHR30544">
    <property type="entry name" value="23S RRNA METHYLTRANSFERASE"/>
    <property type="match status" value="1"/>
</dbReference>
<dbReference type="PANTHER" id="PTHR30544:SF5">
    <property type="entry name" value="RADICAL SAM CORE DOMAIN-CONTAINING PROTEIN"/>
    <property type="match status" value="1"/>
</dbReference>
<dbReference type="Pfam" id="PF04055">
    <property type="entry name" value="Radical_SAM"/>
    <property type="match status" value="1"/>
</dbReference>
<dbReference type="PIRSF" id="PIRSF006004">
    <property type="entry name" value="CHP00048"/>
    <property type="match status" value="1"/>
</dbReference>
<dbReference type="SFLD" id="SFLDF00275">
    <property type="entry name" value="adenosine_C2_methyltransferase"/>
    <property type="match status" value="1"/>
</dbReference>
<dbReference type="SFLD" id="SFLDG01062">
    <property type="entry name" value="methyltransferase_(Class_A)"/>
    <property type="match status" value="1"/>
</dbReference>
<dbReference type="SMART" id="SM00729">
    <property type="entry name" value="Elp3"/>
    <property type="match status" value="1"/>
</dbReference>
<dbReference type="SUPFAM" id="SSF102114">
    <property type="entry name" value="Radical SAM enzymes"/>
    <property type="match status" value="1"/>
</dbReference>
<dbReference type="PROSITE" id="PS51918">
    <property type="entry name" value="RADICAL_SAM"/>
    <property type="match status" value="1"/>
</dbReference>
<feature type="chain" id="PRO_0000350051" description="Probable dual-specificity RNA methyltransferase RlmN">
    <location>
        <begin position="1"/>
        <end position="389"/>
    </location>
</feature>
<feature type="domain" description="Radical SAM core" evidence="2">
    <location>
        <begin position="133"/>
        <end position="376"/>
    </location>
</feature>
<feature type="region of interest" description="Disordered" evidence="3">
    <location>
        <begin position="1"/>
        <end position="23"/>
    </location>
</feature>
<feature type="active site" description="Proton acceptor" evidence="1">
    <location>
        <position position="127"/>
    </location>
</feature>
<feature type="active site" description="S-methylcysteine intermediate" evidence="1">
    <location>
        <position position="381"/>
    </location>
</feature>
<feature type="binding site" evidence="1">
    <location>
        <position position="147"/>
    </location>
    <ligand>
        <name>[4Fe-4S] cluster</name>
        <dbReference type="ChEBI" id="CHEBI:49883"/>
        <note>4Fe-4S-S-AdoMet</note>
    </ligand>
</feature>
<feature type="binding site" evidence="1">
    <location>
        <position position="151"/>
    </location>
    <ligand>
        <name>[4Fe-4S] cluster</name>
        <dbReference type="ChEBI" id="CHEBI:49883"/>
        <note>4Fe-4S-S-AdoMet</note>
    </ligand>
</feature>
<feature type="binding site" evidence="1">
    <location>
        <position position="154"/>
    </location>
    <ligand>
        <name>[4Fe-4S] cluster</name>
        <dbReference type="ChEBI" id="CHEBI:49883"/>
        <note>4Fe-4S-S-AdoMet</note>
    </ligand>
</feature>
<feature type="binding site" evidence="1">
    <location>
        <begin position="202"/>
        <end position="203"/>
    </location>
    <ligand>
        <name>S-adenosyl-L-methionine</name>
        <dbReference type="ChEBI" id="CHEBI:59789"/>
    </ligand>
</feature>
<feature type="binding site" evidence="1">
    <location>
        <position position="236"/>
    </location>
    <ligand>
        <name>S-adenosyl-L-methionine</name>
        <dbReference type="ChEBI" id="CHEBI:59789"/>
    </ligand>
</feature>
<feature type="binding site" evidence="1">
    <location>
        <begin position="259"/>
        <end position="261"/>
    </location>
    <ligand>
        <name>S-adenosyl-L-methionine</name>
        <dbReference type="ChEBI" id="CHEBI:59789"/>
    </ligand>
</feature>
<feature type="binding site" evidence="1">
    <location>
        <position position="338"/>
    </location>
    <ligand>
        <name>S-adenosyl-L-methionine</name>
        <dbReference type="ChEBI" id="CHEBI:59789"/>
    </ligand>
</feature>
<feature type="disulfide bond" description="(transient)" evidence="1">
    <location>
        <begin position="140"/>
        <end position="381"/>
    </location>
</feature>
<proteinExistence type="inferred from homology"/>
<organism>
    <name type="scientific">Bifidobacterium longum (strain NCC 2705)</name>
    <dbReference type="NCBI Taxonomy" id="206672"/>
    <lineage>
        <taxon>Bacteria</taxon>
        <taxon>Bacillati</taxon>
        <taxon>Actinomycetota</taxon>
        <taxon>Actinomycetes</taxon>
        <taxon>Bifidobacteriales</taxon>
        <taxon>Bifidobacteriaceae</taxon>
        <taxon>Bifidobacterium</taxon>
    </lineage>
</organism>
<comment type="function">
    <text evidence="1">Specifically methylates position 2 of adenine 2503 in 23S rRNA and position 2 of adenine 37 in tRNAs.</text>
</comment>
<comment type="catalytic activity">
    <reaction evidence="1">
        <text>adenosine(2503) in 23S rRNA + 2 reduced [2Fe-2S]-[ferredoxin] + 2 S-adenosyl-L-methionine = 2-methyladenosine(2503) in 23S rRNA + 5'-deoxyadenosine + L-methionine + 2 oxidized [2Fe-2S]-[ferredoxin] + S-adenosyl-L-homocysteine</text>
        <dbReference type="Rhea" id="RHEA:42916"/>
        <dbReference type="Rhea" id="RHEA-COMP:10000"/>
        <dbReference type="Rhea" id="RHEA-COMP:10001"/>
        <dbReference type="Rhea" id="RHEA-COMP:10152"/>
        <dbReference type="Rhea" id="RHEA-COMP:10282"/>
        <dbReference type="ChEBI" id="CHEBI:17319"/>
        <dbReference type="ChEBI" id="CHEBI:33737"/>
        <dbReference type="ChEBI" id="CHEBI:33738"/>
        <dbReference type="ChEBI" id="CHEBI:57844"/>
        <dbReference type="ChEBI" id="CHEBI:57856"/>
        <dbReference type="ChEBI" id="CHEBI:59789"/>
        <dbReference type="ChEBI" id="CHEBI:74411"/>
        <dbReference type="ChEBI" id="CHEBI:74497"/>
        <dbReference type="EC" id="2.1.1.192"/>
    </reaction>
</comment>
<comment type="catalytic activity">
    <reaction evidence="1">
        <text>adenosine(37) in tRNA + 2 reduced [2Fe-2S]-[ferredoxin] + 2 S-adenosyl-L-methionine = 2-methyladenosine(37) in tRNA + 5'-deoxyadenosine + L-methionine + 2 oxidized [2Fe-2S]-[ferredoxin] + S-adenosyl-L-homocysteine</text>
        <dbReference type="Rhea" id="RHEA:43332"/>
        <dbReference type="Rhea" id="RHEA-COMP:10000"/>
        <dbReference type="Rhea" id="RHEA-COMP:10001"/>
        <dbReference type="Rhea" id="RHEA-COMP:10162"/>
        <dbReference type="Rhea" id="RHEA-COMP:10485"/>
        <dbReference type="ChEBI" id="CHEBI:17319"/>
        <dbReference type="ChEBI" id="CHEBI:33737"/>
        <dbReference type="ChEBI" id="CHEBI:33738"/>
        <dbReference type="ChEBI" id="CHEBI:57844"/>
        <dbReference type="ChEBI" id="CHEBI:57856"/>
        <dbReference type="ChEBI" id="CHEBI:59789"/>
        <dbReference type="ChEBI" id="CHEBI:74411"/>
        <dbReference type="ChEBI" id="CHEBI:74497"/>
        <dbReference type="EC" id="2.1.1.192"/>
    </reaction>
</comment>
<comment type="cofactor">
    <cofactor evidence="1">
        <name>[4Fe-4S] cluster</name>
        <dbReference type="ChEBI" id="CHEBI:49883"/>
    </cofactor>
    <text evidence="1">Binds 1 [4Fe-4S] cluster. The cluster is coordinated with 3 cysteines and an exchangeable S-adenosyl-L-methionine.</text>
</comment>
<comment type="subcellular location">
    <subcellularLocation>
        <location evidence="1">Cytoplasm</location>
    </subcellularLocation>
</comment>
<comment type="miscellaneous">
    <text evidence="1">Reaction proceeds by a ping-pong mechanism involving intermediate methylation of a conserved cysteine residue.</text>
</comment>
<comment type="similarity">
    <text evidence="1">Belongs to the radical SAM superfamily. RlmN family.</text>
</comment>
<accession>Q8G481</accession>
<evidence type="ECO:0000255" key="1">
    <source>
        <dbReference type="HAMAP-Rule" id="MF_01849"/>
    </source>
</evidence>
<evidence type="ECO:0000255" key="2">
    <source>
        <dbReference type="PROSITE-ProRule" id="PRU01266"/>
    </source>
</evidence>
<evidence type="ECO:0000256" key="3">
    <source>
        <dbReference type="SAM" id="MobiDB-lite"/>
    </source>
</evidence>
<protein>
    <recommendedName>
        <fullName evidence="1">Probable dual-specificity RNA methyltransferase RlmN</fullName>
        <ecNumber evidence="1">2.1.1.192</ecNumber>
    </recommendedName>
    <alternativeName>
        <fullName evidence="1">23S rRNA (adenine(2503)-C(2))-methyltransferase</fullName>
    </alternativeName>
    <alternativeName>
        <fullName evidence="1">23S rRNA m2A2503 methyltransferase</fullName>
    </alternativeName>
    <alternativeName>
        <fullName evidence="1">Ribosomal RNA large subunit methyltransferase N</fullName>
    </alternativeName>
    <alternativeName>
        <fullName evidence="1">tRNA (adenine(37)-C(2))-methyltransferase</fullName>
    </alternativeName>
    <alternativeName>
        <fullName evidence="1">tRNA m2A37 methyltransferase</fullName>
    </alternativeName>
</protein>
<sequence>MTTQHPDTPETGITPGGTSGAFRDVLSKDHARRGKPPLHFVDMTPEQRVEKAAELGLPKFRVKQLANHYFGHFDVNAAEFTDFPAAKRSEAAAAFFPQLITEVTRQVADEGTTIKTLWKLFDGSLIESVLMRYPTRTTLCISSQVGCGMDCPFCATGKLGLTRNMSTGEIIEQVRVAAKMMRDGEVAGGEGRLSNIVFMGMGEPMGNYNSVLSAVRQISAMPPEGFGISARNITVSTVGVVPGIKKLTAEGIPVRLAVSLHAPSDELRDELVPMNKRFNTKQVLDAAHDYWLASKRRVSIEYALMRGINDQAEHAQLLAKRLNHYGDNWAHVNPIPLNPIEGSKWTASKPEDEQRFLEILHRAGITATLRDTRGQDIDGACGQLAAKER</sequence>
<gene>
    <name evidence="1" type="primary">rlmN</name>
    <name type="ordered locus">BL1508</name>
</gene>